<protein>
    <recommendedName>
        <fullName evidence="4">Double-stranded RNA-binding protein Staufen homolog</fullName>
    </recommendedName>
</protein>
<keyword id="KW-0966">Cell projection</keyword>
<keyword id="KW-0677">Repeat</keyword>
<keyword id="KW-0694">RNA-binding</keyword>
<proteinExistence type="evidence at protein level"/>
<reference evidence="6" key="1">
    <citation type="journal article" date="2006" name="J. Neurosci.">
        <title>Two mRNA-binding proteins regulate the distribution of syntaxin mRNA in Aplysia sensory neurons.</title>
        <authorList>
            <person name="Liu J."/>
            <person name="Hu J.Y."/>
            <person name="Wu F."/>
            <person name="Schwartz J.H."/>
            <person name="Schacher S."/>
        </authorList>
    </citation>
    <scope>NUCLEOTIDE SEQUENCE [MRNA]</scope>
    <scope>FUNCTION</scope>
    <scope>SUBCELLULAR LOCATION</scope>
    <scope>TISSUE SPECIFICITY</scope>
</reference>
<reference evidence="5" key="2">
    <citation type="journal article" date="2006" name="Cell">
        <title>Neuronal transcriptome of Aplysia: neuronal compartments and circuitry.</title>
        <authorList>
            <person name="Moroz L.L."/>
            <person name="Edwards J.R."/>
            <person name="Puthanveettil S.V."/>
            <person name="Kohn A.B."/>
            <person name="Ha T."/>
            <person name="Heyland A."/>
            <person name="Knudsen B."/>
            <person name="Sahni A."/>
            <person name="Yu F."/>
            <person name="Liu L."/>
            <person name="Jezzini S."/>
            <person name="Lovell P."/>
            <person name="Iannucculli W."/>
            <person name="Chen M."/>
            <person name="Nguyen T."/>
            <person name="Sheng H."/>
            <person name="Shaw R."/>
            <person name="Kalachikov S."/>
            <person name="Panchin Y.V."/>
            <person name="Farmerie W."/>
            <person name="Russo J.J."/>
            <person name="Ju J."/>
            <person name="Kandel E.R."/>
        </authorList>
    </citation>
    <scope>NUCLEOTIDE SEQUENCE [MRNA] OF 278-950</scope>
</reference>
<dbReference type="EMBL" id="AY764181">
    <property type="protein sequence ID" value="AAW84263.1"/>
    <property type="molecule type" value="mRNA"/>
</dbReference>
<dbReference type="EMBL" id="AY172981">
    <property type="protein sequence ID" value="AAO38741.1"/>
    <property type="status" value="ALT_SEQ"/>
    <property type="molecule type" value="mRNA"/>
</dbReference>
<dbReference type="RefSeq" id="NP_001191404.1">
    <property type="nucleotide sequence ID" value="NM_001204475.1"/>
</dbReference>
<dbReference type="RefSeq" id="NP_001191656.1">
    <property type="nucleotide sequence ID" value="NM_001204727.2"/>
</dbReference>
<dbReference type="SMR" id="Q3L1C9"/>
<dbReference type="EnsemblMetazoa" id="NM_001204727.1">
    <property type="protein sequence ID" value="NP_001191656.1"/>
    <property type="gene ID" value="LOC100533450"/>
</dbReference>
<dbReference type="GeneID" id="100533450"/>
<dbReference type="CTD" id="100049686"/>
<dbReference type="OrthoDB" id="10037267at2759"/>
<dbReference type="Proteomes" id="UP000694888">
    <property type="component" value="Unplaced"/>
</dbReference>
<dbReference type="GO" id="GO:0010494">
    <property type="term" value="C:cytoplasmic stress granule"/>
    <property type="evidence" value="ECO:0007669"/>
    <property type="project" value="TreeGrafter"/>
</dbReference>
<dbReference type="GO" id="GO:0032839">
    <property type="term" value="C:dendrite cytoplasm"/>
    <property type="evidence" value="ECO:0007669"/>
    <property type="project" value="GOC"/>
</dbReference>
<dbReference type="GO" id="GO:0043005">
    <property type="term" value="C:neuron projection"/>
    <property type="evidence" value="ECO:0000314"/>
    <property type="project" value="UniProtKB"/>
</dbReference>
<dbReference type="GO" id="GO:0043025">
    <property type="term" value="C:neuronal cell body"/>
    <property type="evidence" value="ECO:0000314"/>
    <property type="project" value="UniProtKB"/>
</dbReference>
<dbReference type="GO" id="GO:0043204">
    <property type="term" value="C:perikaryon"/>
    <property type="evidence" value="ECO:0007669"/>
    <property type="project" value="UniProtKB-SubCell"/>
</dbReference>
<dbReference type="GO" id="GO:0005886">
    <property type="term" value="C:plasma membrane"/>
    <property type="evidence" value="ECO:0007669"/>
    <property type="project" value="TreeGrafter"/>
</dbReference>
<dbReference type="GO" id="GO:0003725">
    <property type="term" value="F:double-stranded RNA binding"/>
    <property type="evidence" value="ECO:0007669"/>
    <property type="project" value="TreeGrafter"/>
</dbReference>
<dbReference type="GO" id="GO:0003729">
    <property type="term" value="F:mRNA binding"/>
    <property type="evidence" value="ECO:0000314"/>
    <property type="project" value="UniProtKB"/>
</dbReference>
<dbReference type="GO" id="GO:0098964">
    <property type="term" value="P:anterograde dendritic transport of messenger ribonucleoprotein complex"/>
    <property type="evidence" value="ECO:0007669"/>
    <property type="project" value="TreeGrafter"/>
</dbReference>
<dbReference type="GO" id="GO:0007281">
    <property type="term" value="P:germ cell development"/>
    <property type="evidence" value="ECO:0007669"/>
    <property type="project" value="TreeGrafter"/>
</dbReference>
<dbReference type="GO" id="GO:0008298">
    <property type="term" value="P:intracellular mRNA localization"/>
    <property type="evidence" value="ECO:0007669"/>
    <property type="project" value="TreeGrafter"/>
</dbReference>
<dbReference type="GO" id="GO:0035418">
    <property type="term" value="P:protein localization to synapse"/>
    <property type="evidence" value="ECO:0007669"/>
    <property type="project" value="TreeGrafter"/>
</dbReference>
<dbReference type="GO" id="GO:0032880">
    <property type="term" value="P:regulation of protein localization"/>
    <property type="evidence" value="ECO:0000315"/>
    <property type="project" value="UniProtKB"/>
</dbReference>
<dbReference type="CDD" id="cd19882">
    <property type="entry name" value="DSRM_STAU2_rpt2"/>
    <property type="match status" value="1"/>
</dbReference>
<dbReference type="CDD" id="cd19857">
    <property type="entry name" value="DSRM_STAU_rpt1"/>
    <property type="match status" value="1"/>
</dbReference>
<dbReference type="CDD" id="cd19859">
    <property type="entry name" value="DSRM_STAU_rpt3"/>
    <property type="match status" value="1"/>
</dbReference>
<dbReference type="CDD" id="cd19860">
    <property type="entry name" value="DSRM_STAU_rpt4"/>
    <property type="match status" value="1"/>
</dbReference>
<dbReference type="CDD" id="cd19861">
    <property type="entry name" value="DSRM_STAU_rpt5"/>
    <property type="match status" value="1"/>
</dbReference>
<dbReference type="FunFam" id="3.30.160.20:FF:000073">
    <property type="entry name" value="Double-stranded RNA-binding protein Staufen homolog"/>
    <property type="match status" value="1"/>
</dbReference>
<dbReference type="FunFam" id="3.30.160.20:FF:000007">
    <property type="entry name" value="Double-stranded RNA-binding protein Staufen homolog 1"/>
    <property type="match status" value="1"/>
</dbReference>
<dbReference type="FunFam" id="3.30.160.20:FF:000024">
    <property type="entry name" value="double-stranded RNA-binding protein Staufen homolog 1 isoform X1"/>
    <property type="match status" value="1"/>
</dbReference>
<dbReference type="FunFam" id="3.30.160.20:FF:000013">
    <property type="entry name" value="double-stranded RNA-binding protein Staufen homolog 2 isoform X3"/>
    <property type="match status" value="1"/>
</dbReference>
<dbReference type="Gene3D" id="3.30.160.20">
    <property type="match status" value="5"/>
</dbReference>
<dbReference type="InterPro" id="IPR051740">
    <property type="entry name" value="DRBM-containing_protein"/>
</dbReference>
<dbReference type="InterPro" id="IPR014720">
    <property type="entry name" value="dsRBD_dom"/>
</dbReference>
<dbReference type="InterPro" id="IPR044464">
    <property type="entry name" value="STAU2_DSRM_2"/>
</dbReference>
<dbReference type="InterPro" id="IPR032478">
    <property type="entry name" value="Staufen_C"/>
</dbReference>
<dbReference type="PANTHER" id="PTHR46054">
    <property type="entry name" value="MATERNAL EFFECT PROTEIN STAUFEN"/>
    <property type="match status" value="1"/>
</dbReference>
<dbReference type="PANTHER" id="PTHR46054:SF3">
    <property type="entry name" value="MATERNAL EFFECT PROTEIN STAUFEN"/>
    <property type="match status" value="1"/>
</dbReference>
<dbReference type="Pfam" id="PF00035">
    <property type="entry name" value="dsrm"/>
    <property type="match status" value="3"/>
</dbReference>
<dbReference type="Pfam" id="PF16482">
    <property type="entry name" value="Staufen_C"/>
    <property type="match status" value="1"/>
</dbReference>
<dbReference type="SMART" id="SM00358">
    <property type="entry name" value="DSRM"/>
    <property type="match status" value="4"/>
</dbReference>
<dbReference type="SUPFAM" id="SSF54768">
    <property type="entry name" value="dsRNA-binding domain-like"/>
    <property type="match status" value="4"/>
</dbReference>
<dbReference type="PROSITE" id="PS50137">
    <property type="entry name" value="DS_RBD"/>
    <property type="match status" value="4"/>
</dbReference>
<accession>Q3L1C9</accession>
<accession>E2QDA4</accession>
<organism evidence="6">
    <name type="scientific">Aplysia californica</name>
    <name type="common">California sea hare</name>
    <dbReference type="NCBI Taxonomy" id="6500"/>
    <lineage>
        <taxon>Eukaryota</taxon>
        <taxon>Metazoa</taxon>
        <taxon>Spiralia</taxon>
        <taxon>Lophotrochozoa</taxon>
        <taxon>Mollusca</taxon>
        <taxon>Gastropoda</taxon>
        <taxon>Heterobranchia</taxon>
        <taxon>Euthyneura</taxon>
        <taxon>Tectipleura</taxon>
        <taxon>Aplysiida</taxon>
        <taxon>Aplysioidea</taxon>
        <taxon>Aplysiidae</taxon>
        <taxon>Aplysia</taxon>
    </lineage>
</organism>
<evidence type="ECO:0000255" key="1">
    <source>
        <dbReference type="PROSITE-ProRule" id="PRU00266"/>
    </source>
</evidence>
<evidence type="ECO:0000256" key="2">
    <source>
        <dbReference type="SAM" id="MobiDB-lite"/>
    </source>
</evidence>
<evidence type="ECO:0000269" key="3">
    <source>
    </source>
</evidence>
<evidence type="ECO:0000305" key="4"/>
<evidence type="ECO:0000312" key="5">
    <source>
        <dbReference type="EMBL" id="AAO38741.1"/>
    </source>
</evidence>
<evidence type="ECO:0000312" key="6">
    <source>
        <dbReference type="EMBL" id="AAW84263.1"/>
    </source>
</evidence>
<sequence length="950" mass="105959">MSHNHMMNNQQQHAAMINPGAVASVSGAQVQQRSMMSQQRGGSHAINSSKSPYQLQTSSISQFSHLQQQQQQQQQQQLVNNYHKQKQMSPDITSHQFSSSTGGGMPTQNGNYQSMSGSSIHTSMGLDNGQLSLQHQHHQYSSQPAQALQTSVQQHHYQSQQMTQQQQQAAQQQPQQQYQSFQQQHHLIQQQQQQQQIHTQQQQQLPQQAMHQQQQHLQLHQHLQQRSLNQQQQQQQRYQKQQQQPQPKQILQHSPTSGKSLSSAPHGTSVQPSTLLNHHQHNMAAPQVTPVTNGESAGEDTSPKDSPQAPKTSGRDSVHVSDNEESASNASEMQQSLANTKEKTPMCLINELARFNKMSHQYTLVDEQGPAHKKTFYVKLKLGDEEYSASGESIKKAQHAAAAIALVETKCPHPPPKPARLGCCDLEKSADGNITPTVELNALAMKRGEPALYKSIEPQQPPYYHQPNMDFRGLYNQRYHQYMRASRDPRYRGNGVLWPLRYHYPRMNRAFYVSLRVGHREFIGDGPTRQAARHNAAQKALRILKNLPVQSGEKKSEEQADEAAEDACEEDVDDSLKSEISLVHEIALRRNMVVQFEVIRETGPPHMKNFLTRCTVADMVTEGEGNSKKTSKKKAAELMLEELRKLPPLATPAFPRPKSKIQMNKKKNRNLIKSELQQQKADPNYGVGINPISRLIQIMQAQKKKEPVYTLVTERGLPRRREFIVQVEVEDKTCPGSGPNKKLAKRAAAEAMLQLLGYTKPSPQPTKSSFKNPSTGEAGQTNGDKKVTFVGGDSPGDGDDKVSSGSNQQRVPGLLHLPSKSSASSSGNQHTASKESLVNLASILKPNLRPEIQLRELCKAMDCQLEIDDFTKKRTSGTEHITRITIGSENPQSFHGSNTSLESSRDMAALDALKVLVARAKDIHPGGDGPQVKKDVLARSGSGMKKDFSK</sequence>
<name>STAUH_APLCA</name>
<feature type="chain" id="PRO_0000437248" description="Double-stranded RNA-binding protein Staufen homolog">
    <location>
        <begin position="1"/>
        <end position="950"/>
    </location>
</feature>
<feature type="domain" description="DRBM 1" evidence="1">
    <location>
        <begin position="344"/>
        <end position="411"/>
    </location>
</feature>
<feature type="domain" description="DRBM 2" evidence="1">
    <location>
        <begin position="435"/>
        <end position="546"/>
    </location>
</feature>
<feature type="domain" description="DRBM 3" evidence="1">
    <location>
        <begin position="578"/>
        <end position="645"/>
    </location>
</feature>
<feature type="domain" description="DRBM 4" evidence="1">
    <location>
        <begin position="690"/>
        <end position="758"/>
    </location>
</feature>
<feature type="region of interest" description="Disordered" evidence="2">
    <location>
        <begin position="25"/>
        <end position="168"/>
    </location>
</feature>
<feature type="region of interest" description="Disordered" evidence="2">
    <location>
        <begin position="202"/>
        <end position="274"/>
    </location>
</feature>
<feature type="region of interest" description="Disordered" evidence="2">
    <location>
        <begin position="288"/>
        <end position="342"/>
    </location>
</feature>
<feature type="region of interest" description="Disordered" evidence="2">
    <location>
        <begin position="758"/>
        <end position="833"/>
    </location>
</feature>
<feature type="region of interest" description="Disordered" evidence="2">
    <location>
        <begin position="922"/>
        <end position="950"/>
    </location>
</feature>
<feature type="compositionally biased region" description="Low complexity" evidence="2">
    <location>
        <begin position="31"/>
        <end position="43"/>
    </location>
</feature>
<feature type="compositionally biased region" description="Polar residues" evidence="2">
    <location>
        <begin position="45"/>
        <end position="66"/>
    </location>
</feature>
<feature type="compositionally biased region" description="Low complexity" evidence="2">
    <location>
        <begin position="67"/>
        <end position="77"/>
    </location>
</feature>
<feature type="compositionally biased region" description="Polar residues" evidence="2">
    <location>
        <begin position="78"/>
        <end position="122"/>
    </location>
</feature>
<feature type="compositionally biased region" description="Low complexity" evidence="2">
    <location>
        <begin position="130"/>
        <end position="143"/>
    </location>
</feature>
<feature type="compositionally biased region" description="Low complexity" evidence="2">
    <location>
        <begin position="153"/>
        <end position="168"/>
    </location>
</feature>
<feature type="compositionally biased region" description="Low complexity" evidence="2">
    <location>
        <begin position="202"/>
        <end position="253"/>
    </location>
</feature>
<feature type="compositionally biased region" description="Polar residues" evidence="2">
    <location>
        <begin position="254"/>
        <end position="274"/>
    </location>
</feature>
<feature type="compositionally biased region" description="Basic and acidic residues" evidence="2">
    <location>
        <begin position="313"/>
        <end position="322"/>
    </location>
</feature>
<feature type="compositionally biased region" description="Polar residues" evidence="2">
    <location>
        <begin position="765"/>
        <end position="782"/>
    </location>
</feature>
<feature type="compositionally biased region" description="Basic and acidic residues" evidence="2">
    <location>
        <begin position="922"/>
        <end position="937"/>
    </location>
</feature>
<feature type="sequence conflict" description="In Ref. 2; AAO38741." evidence="4" ref="2">
    <original>E</original>
    <variation>G</variation>
    <location>
        <position position="408"/>
    </location>
</feature>
<comment type="function">
    <text evidence="3">RNA-binding protein which is required for syntaxin location in sensory neurons during long-term synaptic facilitation. Binds to syntaxin mRNA and is required to maintain its accumulation at the axon hillock following neuronal stimulation and at the opposite pole in stable unstimulated sensory neurons.</text>
</comment>
<comment type="subcellular location">
    <subcellularLocation>
        <location evidence="3">Perikaryon</location>
    </subcellularLocation>
    <subcellularLocation>
        <location evidence="3">Cell projection</location>
    </subcellularLocation>
    <text evidence="3">Present in both the perikaryon and neurites of sensory neurons. In unstimulated sensory neurons, located in the region of the perikaryon opposite the axon hillock. After neuronal stimulation, expressed at highest levels at the axon hillock.</text>
</comment>
<comment type="tissue specificity">
    <text evidence="3">Strongly expressed in nervous tissue (at protein level).</text>
</comment>
<comment type="sequence caution" evidence="4">
    <conflict type="miscellaneous discrepancy">
        <sequence resource="EMBL-CDS" id="AAO38741"/>
    </conflict>
    <text>Probable cloning artifact.</text>
</comment>